<accession>P53171</accession>
<accession>D6VU84</accession>
<dbReference type="EMBL" id="Z72579">
    <property type="protein sequence ID" value="CAA96760.1"/>
    <property type="molecule type" value="Genomic_DNA"/>
</dbReference>
<dbReference type="EMBL" id="BK006941">
    <property type="protein sequence ID" value="DAA08045.1"/>
    <property type="molecule type" value="Genomic_DNA"/>
</dbReference>
<dbReference type="PIR" id="S64061">
    <property type="entry name" value="S64061"/>
</dbReference>
<dbReference type="RefSeq" id="NP_011458.1">
    <property type="nucleotide sequence ID" value="NM_001180922.1"/>
</dbReference>
<dbReference type="BioGRID" id="33190">
    <property type="interactions" value="170"/>
</dbReference>
<dbReference type="DIP" id="DIP-2071N"/>
<dbReference type="FunCoup" id="P53171">
    <property type="interactions" value="29"/>
</dbReference>
<dbReference type="IntAct" id="P53171">
    <property type="interactions" value="3"/>
</dbReference>
<dbReference type="MINT" id="P53171"/>
<dbReference type="STRING" id="4932.YGL057C"/>
<dbReference type="PaxDb" id="4932-YGL057C"/>
<dbReference type="PeptideAtlas" id="P53171"/>
<dbReference type="EnsemblFungi" id="YGL057C_mRNA">
    <property type="protein sequence ID" value="YGL057C"/>
    <property type="gene ID" value="YGL057C"/>
</dbReference>
<dbReference type="GeneID" id="852823"/>
<dbReference type="KEGG" id="sce:YGL057C"/>
<dbReference type="AGR" id="SGD:S000003025"/>
<dbReference type="SGD" id="S000003025">
    <property type="gene designation" value="GEP7"/>
</dbReference>
<dbReference type="VEuPathDB" id="FungiDB:YGL057C"/>
<dbReference type="HOGENOM" id="CLU_064141_0_0_1"/>
<dbReference type="InParanoid" id="P53171"/>
<dbReference type="OMA" id="EYNWFLL"/>
<dbReference type="OrthoDB" id="4069787at2759"/>
<dbReference type="BioCyc" id="YEAST:G3O-30565-MONOMER"/>
<dbReference type="BioGRID-ORCS" id="852823">
    <property type="hits" value="0 hits in 10 CRISPR screens"/>
</dbReference>
<dbReference type="PRO" id="PR:P53171"/>
<dbReference type="Proteomes" id="UP000002311">
    <property type="component" value="Chromosome VII"/>
</dbReference>
<dbReference type="RNAct" id="P53171">
    <property type="molecule type" value="protein"/>
</dbReference>
<dbReference type="GO" id="GO:0031966">
    <property type="term" value="C:mitochondrial membrane"/>
    <property type="evidence" value="ECO:0007669"/>
    <property type="project" value="UniProtKB-SubCell"/>
</dbReference>
<dbReference type="GO" id="GO:0005739">
    <property type="term" value="C:mitochondrion"/>
    <property type="evidence" value="ECO:0007005"/>
    <property type="project" value="SGD"/>
</dbReference>
<proteinExistence type="evidence at protein level"/>
<name>GEP7_YEAST</name>
<protein>
    <recommendedName>
        <fullName>Genetic interactor of prohibitin 7, mitochondrial</fullName>
    </recommendedName>
</protein>
<feature type="transit peptide" description="Mitochondrion" evidence="1">
    <location>
        <begin position="1"/>
        <end position="24"/>
    </location>
</feature>
<feature type="chain" id="PRO_0000202766" description="Genetic interactor of prohibitin 7, mitochondrial">
    <location>
        <begin position="25"/>
        <end position="287"/>
    </location>
</feature>
<feature type="transmembrane region" description="Helical" evidence="1">
    <location>
        <begin position="250"/>
        <end position="266"/>
    </location>
</feature>
<keyword id="KW-0472">Membrane</keyword>
<keyword id="KW-0496">Mitochondrion</keyword>
<keyword id="KW-1185">Reference proteome</keyword>
<keyword id="KW-0809">Transit peptide</keyword>
<keyword id="KW-0812">Transmembrane</keyword>
<keyword id="KW-1133">Transmembrane helix</keyword>
<gene>
    <name type="primary">GEP7</name>
    <name type="ordered locus">YGL057C</name>
</gene>
<sequence length="287" mass="32959">MVLSNVKIFRLKSHRAFRIGPMIKAVAGNLLVKRFYQPKLERIPPASLLLKQKIRLAQNGSTTSTENPISFSQTMSEIFSVLQPSAPDLDEDETSGLKRDHLLTERLNNGELGVIMNKFFNPSSTHNNQLIDTNILLQNFPKLSGNDLDLLDFAINEKMRGNWNDLKQDFIQLWYYKSFGFLGPRTQFVLTNSSPSVRSQFLKLPFIEYNWFLLQNNKNANILPADVQNVVKVFHLDDKRFTWKSIDPFSKAIISFVVFVSIYVWLDESAKQKTKELPAQKSTVISE</sequence>
<comment type="function">
    <text evidence="4 5">Involved in respiratory growth and required for cell survival in the absence of prohibitins or GEM1.</text>
</comment>
<comment type="subcellular location">
    <subcellularLocation>
        <location evidence="2 3">Mitochondrion membrane</location>
        <topology evidence="2 3">Single-pass membrane protein</topology>
    </subcellularLocation>
</comment>
<comment type="similarity">
    <text evidence="6">Belongs to the GEP7 family.</text>
</comment>
<organism>
    <name type="scientific">Saccharomyces cerevisiae (strain ATCC 204508 / S288c)</name>
    <name type="common">Baker's yeast</name>
    <dbReference type="NCBI Taxonomy" id="559292"/>
    <lineage>
        <taxon>Eukaryota</taxon>
        <taxon>Fungi</taxon>
        <taxon>Dikarya</taxon>
        <taxon>Ascomycota</taxon>
        <taxon>Saccharomycotina</taxon>
        <taxon>Saccharomycetes</taxon>
        <taxon>Saccharomycetales</taxon>
        <taxon>Saccharomycetaceae</taxon>
        <taxon>Saccharomyces</taxon>
    </lineage>
</organism>
<evidence type="ECO:0000255" key="1"/>
<evidence type="ECO:0000269" key="2">
    <source>
    </source>
</evidence>
<evidence type="ECO:0000269" key="3">
    <source>
    </source>
</evidence>
<evidence type="ECO:0000269" key="4">
    <source>
    </source>
</evidence>
<evidence type="ECO:0000269" key="5">
    <source>
    </source>
</evidence>
<evidence type="ECO:0000305" key="6"/>
<reference key="1">
    <citation type="journal article" date="1997" name="Yeast">
        <title>The characterization of two new clusters of duplicated genes suggests a 'Lego' organization of the yeast Saccharomyces cerevisiae chromosomes.</title>
        <authorList>
            <person name="Feuermann M."/>
            <person name="de Montigny J."/>
            <person name="Potier S."/>
            <person name="Souciet J.-L."/>
        </authorList>
    </citation>
    <scope>NUCLEOTIDE SEQUENCE [GENOMIC DNA]</scope>
    <source>
        <strain>ATCC 204508 / S288c</strain>
    </source>
</reference>
<reference key="2">
    <citation type="journal article" date="1997" name="Nature">
        <title>The nucleotide sequence of Saccharomyces cerevisiae chromosome VII.</title>
        <authorList>
            <person name="Tettelin H."/>
            <person name="Agostoni-Carbone M.L."/>
            <person name="Albermann K."/>
            <person name="Albers M."/>
            <person name="Arroyo J."/>
            <person name="Backes U."/>
            <person name="Barreiros T."/>
            <person name="Bertani I."/>
            <person name="Bjourson A.J."/>
            <person name="Brueckner M."/>
            <person name="Bruschi C.V."/>
            <person name="Carignani G."/>
            <person name="Castagnoli L."/>
            <person name="Cerdan E."/>
            <person name="Clemente M.L."/>
            <person name="Coblenz A."/>
            <person name="Coglievina M."/>
            <person name="Coissac E."/>
            <person name="Defoor E."/>
            <person name="Del Bino S."/>
            <person name="Delius H."/>
            <person name="Delneri D."/>
            <person name="de Wergifosse P."/>
            <person name="Dujon B."/>
            <person name="Durand P."/>
            <person name="Entian K.-D."/>
            <person name="Eraso P."/>
            <person name="Escribano V."/>
            <person name="Fabiani L."/>
            <person name="Fartmann B."/>
            <person name="Feroli F."/>
            <person name="Feuermann M."/>
            <person name="Frontali L."/>
            <person name="Garcia-Gonzalez M."/>
            <person name="Garcia-Saez M.I."/>
            <person name="Goffeau A."/>
            <person name="Guerreiro P."/>
            <person name="Hani J."/>
            <person name="Hansen M."/>
            <person name="Hebling U."/>
            <person name="Hernandez K."/>
            <person name="Heumann K."/>
            <person name="Hilger F."/>
            <person name="Hofmann B."/>
            <person name="Indge K.J."/>
            <person name="James C.M."/>
            <person name="Klima R."/>
            <person name="Koetter P."/>
            <person name="Kramer B."/>
            <person name="Kramer W."/>
            <person name="Lauquin G."/>
            <person name="Leuther H."/>
            <person name="Louis E.J."/>
            <person name="Maillier E."/>
            <person name="Marconi A."/>
            <person name="Martegani E."/>
            <person name="Mazon M.J."/>
            <person name="Mazzoni C."/>
            <person name="McReynolds A.D.K."/>
            <person name="Melchioretto P."/>
            <person name="Mewes H.-W."/>
            <person name="Minenkova O."/>
            <person name="Mueller-Auer S."/>
            <person name="Nawrocki A."/>
            <person name="Netter P."/>
            <person name="Neu R."/>
            <person name="Nombela C."/>
            <person name="Oliver S.G."/>
            <person name="Panzeri L."/>
            <person name="Paoluzi S."/>
            <person name="Plevani P."/>
            <person name="Portetelle D."/>
            <person name="Portillo F."/>
            <person name="Potier S."/>
            <person name="Purnelle B."/>
            <person name="Rieger M."/>
            <person name="Riles L."/>
            <person name="Rinaldi T."/>
            <person name="Robben J."/>
            <person name="Rodrigues-Pousada C."/>
            <person name="Rodriguez-Belmonte E."/>
            <person name="Rodriguez-Torres A.M."/>
            <person name="Rose M."/>
            <person name="Ruzzi M."/>
            <person name="Saliola M."/>
            <person name="Sanchez-Perez M."/>
            <person name="Schaefer B."/>
            <person name="Schaefer M."/>
            <person name="Scharfe M."/>
            <person name="Schmidheini T."/>
            <person name="Schreer A."/>
            <person name="Skala J."/>
            <person name="Souciet J.-L."/>
            <person name="Steensma H.Y."/>
            <person name="Talla E."/>
            <person name="Thierry A."/>
            <person name="Vandenbol M."/>
            <person name="van der Aart Q.J.M."/>
            <person name="Van Dyck L."/>
            <person name="Vanoni M."/>
            <person name="Verhasselt P."/>
            <person name="Voet M."/>
            <person name="Volckaert G."/>
            <person name="Wambutt R."/>
            <person name="Watson M.D."/>
            <person name="Weber N."/>
            <person name="Wedler E."/>
            <person name="Wedler H."/>
            <person name="Wipfli P."/>
            <person name="Wolf K."/>
            <person name="Wright L.F."/>
            <person name="Zaccaria P."/>
            <person name="Zimmermann M."/>
            <person name="Zollner A."/>
            <person name="Kleine K."/>
        </authorList>
    </citation>
    <scope>NUCLEOTIDE SEQUENCE [LARGE SCALE GENOMIC DNA]</scope>
    <source>
        <strain>ATCC 204508 / S288c</strain>
    </source>
</reference>
<reference key="3">
    <citation type="journal article" date="2014" name="G3 (Bethesda)">
        <title>The reference genome sequence of Saccharomyces cerevisiae: Then and now.</title>
        <authorList>
            <person name="Engel S.R."/>
            <person name="Dietrich F.S."/>
            <person name="Fisk D.G."/>
            <person name="Binkley G."/>
            <person name="Balakrishnan R."/>
            <person name="Costanzo M.C."/>
            <person name="Dwight S.S."/>
            <person name="Hitz B.C."/>
            <person name="Karra K."/>
            <person name="Nash R.S."/>
            <person name="Weng S."/>
            <person name="Wong E.D."/>
            <person name="Lloyd P."/>
            <person name="Skrzypek M.S."/>
            <person name="Miyasato S.R."/>
            <person name="Simison M."/>
            <person name="Cherry J.M."/>
        </authorList>
    </citation>
    <scope>GENOME REANNOTATION</scope>
    <source>
        <strain>ATCC 204508 / S288c</strain>
    </source>
</reference>
<reference key="4">
    <citation type="journal article" date="2003" name="Nature">
        <title>Global analysis of protein localization in budding yeast.</title>
        <authorList>
            <person name="Huh W.-K."/>
            <person name="Falvo J.V."/>
            <person name="Gerke L.C."/>
            <person name="Carroll A.S."/>
            <person name="Howson R.W."/>
            <person name="Weissman J.S."/>
            <person name="O'Shea E.K."/>
        </authorList>
    </citation>
    <scope>SUBCELLULAR LOCATION [LARGE SCALE ANALYSIS]</scope>
</reference>
<reference key="5">
    <citation type="journal article" date="2006" name="J. Proteome Res.">
        <title>Toward the complete yeast mitochondrial proteome: multidimensional separation techniques for mitochondrial proteomics.</title>
        <authorList>
            <person name="Reinders J."/>
            <person name="Zahedi R.P."/>
            <person name="Pfanner N."/>
            <person name="Meisinger C."/>
            <person name="Sickmann A."/>
        </authorList>
    </citation>
    <scope>SUBCELLULAR LOCATION [LARGE SCALE ANALYSIS]</scope>
    <scope>IDENTIFICATION BY MASS SPECTROMETRY</scope>
</reference>
<reference key="6">
    <citation type="journal article" date="2008" name="Genetics">
        <title>Multiple pathways influence mitochondrial inheritance in budding yeast.</title>
        <authorList>
            <person name="Frederick R.L."/>
            <person name="Okamoto K."/>
            <person name="Shaw J.M."/>
        </authorList>
    </citation>
    <scope>FUNCTION</scope>
</reference>
<reference key="7">
    <citation type="journal article" date="2009" name="J. Cell Biol.">
        <title>The genetic interactome of prohibitins: coordinated control of cardiolipin and phosphatidylethanolamine by conserved regulators in mitochondria.</title>
        <authorList>
            <person name="Osman C."/>
            <person name="Haag M."/>
            <person name="Potting C."/>
            <person name="Rodenfels J."/>
            <person name="Dip P.V."/>
            <person name="Wieland F.T."/>
            <person name="Brugger B."/>
            <person name="Westermann B."/>
            <person name="Langer T."/>
        </authorList>
    </citation>
    <scope>FUNCTION</scope>
</reference>